<comment type="function">
    <text evidence="1">Large subunit of the glutamine-dependent carbamoyl phosphate synthetase (CPSase). CPSase catalyzes the formation of carbamoyl phosphate from the ammonia moiety of glutamine, carbonate, and phosphate donated by ATP, constituting the first step of 2 biosynthetic pathways, one leading to arginine and/or urea and the other to pyrimidine nucleotides. The large subunit (synthetase) binds the substrates ammonia (free or transferred from glutamine from the small subunit), hydrogencarbonate and ATP and carries out an ATP-coupled ligase reaction, activating hydrogencarbonate by forming carboxy phosphate which reacts with ammonia to form carbamoyl phosphate.</text>
</comment>
<comment type="catalytic activity">
    <reaction evidence="1">
        <text>hydrogencarbonate + L-glutamine + 2 ATP + H2O = carbamoyl phosphate + L-glutamate + 2 ADP + phosphate + 2 H(+)</text>
        <dbReference type="Rhea" id="RHEA:18633"/>
        <dbReference type="ChEBI" id="CHEBI:15377"/>
        <dbReference type="ChEBI" id="CHEBI:15378"/>
        <dbReference type="ChEBI" id="CHEBI:17544"/>
        <dbReference type="ChEBI" id="CHEBI:29985"/>
        <dbReference type="ChEBI" id="CHEBI:30616"/>
        <dbReference type="ChEBI" id="CHEBI:43474"/>
        <dbReference type="ChEBI" id="CHEBI:58228"/>
        <dbReference type="ChEBI" id="CHEBI:58359"/>
        <dbReference type="ChEBI" id="CHEBI:456216"/>
        <dbReference type="EC" id="6.3.5.5"/>
    </reaction>
</comment>
<comment type="catalytic activity">
    <molecule>Carbamoyl phosphate synthase large chain</molecule>
    <reaction evidence="1">
        <text>hydrogencarbonate + NH4(+) + 2 ATP = carbamoyl phosphate + 2 ADP + phosphate + 2 H(+)</text>
        <dbReference type="Rhea" id="RHEA:18029"/>
        <dbReference type="ChEBI" id="CHEBI:15378"/>
        <dbReference type="ChEBI" id="CHEBI:17544"/>
        <dbReference type="ChEBI" id="CHEBI:28938"/>
        <dbReference type="ChEBI" id="CHEBI:30616"/>
        <dbReference type="ChEBI" id="CHEBI:43474"/>
        <dbReference type="ChEBI" id="CHEBI:58228"/>
        <dbReference type="ChEBI" id="CHEBI:456216"/>
        <dbReference type="EC" id="6.3.4.16"/>
    </reaction>
</comment>
<comment type="cofactor">
    <cofactor evidence="1">
        <name>Mg(2+)</name>
        <dbReference type="ChEBI" id="CHEBI:18420"/>
    </cofactor>
    <cofactor evidence="1">
        <name>Mn(2+)</name>
        <dbReference type="ChEBI" id="CHEBI:29035"/>
    </cofactor>
    <text evidence="1">Binds 4 Mg(2+) or Mn(2+) ions per subunit.</text>
</comment>
<comment type="pathway">
    <text evidence="1">Amino-acid biosynthesis; L-arginine biosynthesis; carbamoyl phosphate from bicarbonate: step 1/1.</text>
</comment>
<comment type="pathway">
    <text evidence="1">Pyrimidine metabolism; UMP biosynthesis via de novo pathway; (S)-dihydroorotate from bicarbonate: step 1/3.</text>
</comment>
<comment type="subunit">
    <text evidence="1">Composed of two chains; the small (or glutamine) chain promotes the hydrolysis of glutamine to ammonia, which is used by the large (or ammonia) chain to synthesize carbamoyl phosphate. Tetramer of heterodimers (alpha,beta)4.</text>
</comment>
<comment type="domain">
    <text evidence="1">The large subunit is composed of 2 ATP-grasp domains that are involved in binding the 2 ATP molecules needed for carbamoyl phosphate synthesis. The N-terminal ATP-grasp domain (referred to as the carboxyphosphate synthetic component) catalyzes the ATP-dependent phosphorylation of hydrogencarbonate to carboxyphosphate and the subsequent nucleophilic attack by ammonia to form a carbamate intermediate. The C-terminal ATP-grasp domain (referred to as the carbamoyl phosphate synthetic component) then catalyzes the phosphorylation of carbamate with the second ATP to form the end product carbamoyl phosphate. The reactive and unstable enzyme intermediates are sequentially channeled from one active site to the next through the interior of the protein over a distance of at least 96 A.</text>
</comment>
<comment type="similarity">
    <text evidence="1">Belongs to the CarB family.</text>
</comment>
<name>CARB_BEUC1</name>
<proteinExistence type="inferred from homology"/>
<keyword id="KW-0028">Amino-acid biosynthesis</keyword>
<keyword id="KW-0055">Arginine biosynthesis</keyword>
<keyword id="KW-0067">ATP-binding</keyword>
<keyword id="KW-0436">Ligase</keyword>
<keyword id="KW-0460">Magnesium</keyword>
<keyword id="KW-0464">Manganese</keyword>
<keyword id="KW-0479">Metal-binding</keyword>
<keyword id="KW-0547">Nucleotide-binding</keyword>
<keyword id="KW-0665">Pyrimidine biosynthesis</keyword>
<keyword id="KW-1185">Reference proteome</keyword>
<keyword id="KW-0677">Repeat</keyword>
<feature type="chain" id="PRO_1000213872" description="Carbamoyl phosphate synthase large chain">
    <location>
        <begin position="1"/>
        <end position="1109"/>
    </location>
</feature>
<feature type="domain" description="ATP-grasp 1" evidence="1">
    <location>
        <begin position="133"/>
        <end position="328"/>
    </location>
</feature>
<feature type="domain" description="ATP-grasp 2" evidence="1">
    <location>
        <begin position="678"/>
        <end position="876"/>
    </location>
</feature>
<feature type="domain" description="MGS-like" evidence="1">
    <location>
        <begin position="957"/>
        <end position="1102"/>
    </location>
</feature>
<feature type="region of interest" description="Carboxyphosphate synthetic domain" evidence="1">
    <location>
        <begin position="1"/>
        <end position="402"/>
    </location>
</feature>
<feature type="region of interest" description="Oligomerization domain" evidence="1">
    <location>
        <begin position="403"/>
        <end position="548"/>
    </location>
</feature>
<feature type="region of interest" description="Carbamoyl phosphate synthetic domain" evidence="1">
    <location>
        <begin position="549"/>
        <end position="956"/>
    </location>
</feature>
<feature type="region of interest" description="Allosteric domain" evidence="1">
    <location>
        <begin position="957"/>
        <end position="1109"/>
    </location>
</feature>
<feature type="binding site" evidence="1">
    <location>
        <position position="129"/>
    </location>
    <ligand>
        <name>ATP</name>
        <dbReference type="ChEBI" id="CHEBI:30616"/>
        <label>1</label>
    </ligand>
</feature>
<feature type="binding site" evidence="1">
    <location>
        <position position="169"/>
    </location>
    <ligand>
        <name>ATP</name>
        <dbReference type="ChEBI" id="CHEBI:30616"/>
        <label>1</label>
    </ligand>
</feature>
<feature type="binding site" evidence="1">
    <location>
        <position position="175"/>
    </location>
    <ligand>
        <name>ATP</name>
        <dbReference type="ChEBI" id="CHEBI:30616"/>
        <label>1</label>
    </ligand>
</feature>
<feature type="binding site" evidence="1">
    <location>
        <position position="176"/>
    </location>
    <ligand>
        <name>ATP</name>
        <dbReference type="ChEBI" id="CHEBI:30616"/>
        <label>1</label>
    </ligand>
</feature>
<feature type="binding site" evidence="1">
    <location>
        <position position="208"/>
    </location>
    <ligand>
        <name>ATP</name>
        <dbReference type="ChEBI" id="CHEBI:30616"/>
        <label>1</label>
    </ligand>
</feature>
<feature type="binding site" evidence="1">
    <location>
        <position position="210"/>
    </location>
    <ligand>
        <name>ATP</name>
        <dbReference type="ChEBI" id="CHEBI:30616"/>
        <label>1</label>
    </ligand>
</feature>
<feature type="binding site" evidence="1">
    <location>
        <position position="215"/>
    </location>
    <ligand>
        <name>ATP</name>
        <dbReference type="ChEBI" id="CHEBI:30616"/>
        <label>1</label>
    </ligand>
</feature>
<feature type="binding site" evidence="1">
    <location>
        <position position="241"/>
    </location>
    <ligand>
        <name>ATP</name>
        <dbReference type="ChEBI" id="CHEBI:30616"/>
        <label>1</label>
    </ligand>
</feature>
<feature type="binding site" evidence="1">
    <location>
        <position position="242"/>
    </location>
    <ligand>
        <name>ATP</name>
        <dbReference type="ChEBI" id="CHEBI:30616"/>
        <label>1</label>
    </ligand>
</feature>
<feature type="binding site" evidence="1">
    <location>
        <position position="243"/>
    </location>
    <ligand>
        <name>ATP</name>
        <dbReference type="ChEBI" id="CHEBI:30616"/>
        <label>1</label>
    </ligand>
</feature>
<feature type="binding site" evidence="1">
    <location>
        <position position="285"/>
    </location>
    <ligand>
        <name>ATP</name>
        <dbReference type="ChEBI" id="CHEBI:30616"/>
        <label>1</label>
    </ligand>
</feature>
<feature type="binding site" evidence="1">
    <location>
        <position position="285"/>
    </location>
    <ligand>
        <name>Mg(2+)</name>
        <dbReference type="ChEBI" id="CHEBI:18420"/>
        <label>1</label>
    </ligand>
</feature>
<feature type="binding site" evidence="1">
    <location>
        <position position="285"/>
    </location>
    <ligand>
        <name>Mn(2+)</name>
        <dbReference type="ChEBI" id="CHEBI:29035"/>
        <label>1</label>
    </ligand>
</feature>
<feature type="binding site" evidence="1">
    <location>
        <position position="299"/>
    </location>
    <ligand>
        <name>ATP</name>
        <dbReference type="ChEBI" id="CHEBI:30616"/>
        <label>1</label>
    </ligand>
</feature>
<feature type="binding site" evidence="1">
    <location>
        <position position="299"/>
    </location>
    <ligand>
        <name>Mg(2+)</name>
        <dbReference type="ChEBI" id="CHEBI:18420"/>
        <label>1</label>
    </ligand>
</feature>
<feature type="binding site" evidence="1">
    <location>
        <position position="299"/>
    </location>
    <ligand>
        <name>Mg(2+)</name>
        <dbReference type="ChEBI" id="CHEBI:18420"/>
        <label>2</label>
    </ligand>
</feature>
<feature type="binding site" evidence="1">
    <location>
        <position position="299"/>
    </location>
    <ligand>
        <name>Mn(2+)</name>
        <dbReference type="ChEBI" id="CHEBI:29035"/>
        <label>1</label>
    </ligand>
</feature>
<feature type="binding site" evidence="1">
    <location>
        <position position="299"/>
    </location>
    <ligand>
        <name>Mn(2+)</name>
        <dbReference type="ChEBI" id="CHEBI:29035"/>
        <label>2</label>
    </ligand>
</feature>
<feature type="binding site" evidence="1">
    <location>
        <position position="301"/>
    </location>
    <ligand>
        <name>Mg(2+)</name>
        <dbReference type="ChEBI" id="CHEBI:18420"/>
        <label>2</label>
    </ligand>
</feature>
<feature type="binding site" evidence="1">
    <location>
        <position position="301"/>
    </location>
    <ligand>
        <name>Mn(2+)</name>
        <dbReference type="ChEBI" id="CHEBI:29035"/>
        <label>2</label>
    </ligand>
</feature>
<feature type="binding site" evidence="1">
    <location>
        <position position="714"/>
    </location>
    <ligand>
        <name>ATP</name>
        <dbReference type="ChEBI" id="CHEBI:30616"/>
        <label>2</label>
    </ligand>
</feature>
<feature type="binding site" evidence="1">
    <location>
        <position position="760"/>
    </location>
    <ligand>
        <name>ATP</name>
        <dbReference type="ChEBI" id="CHEBI:30616"/>
        <label>2</label>
    </ligand>
</feature>
<feature type="binding site" evidence="1">
    <location>
        <position position="762"/>
    </location>
    <ligand>
        <name>ATP</name>
        <dbReference type="ChEBI" id="CHEBI:30616"/>
        <label>2</label>
    </ligand>
</feature>
<feature type="binding site" evidence="1">
    <location>
        <position position="767"/>
    </location>
    <ligand>
        <name>ATP</name>
        <dbReference type="ChEBI" id="CHEBI:30616"/>
        <label>2</label>
    </ligand>
</feature>
<feature type="binding site" evidence="1">
    <location>
        <position position="792"/>
    </location>
    <ligand>
        <name>ATP</name>
        <dbReference type="ChEBI" id="CHEBI:30616"/>
        <label>2</label>
    </ligand>
</feature>
<feature type="binding site" evidence="1">
    <location>
        <position position="793"/>
    </location>
    <ligand>
        <name>ATP</name>
        <dbReference type="ChEBI" id="CHEBI:30616"/>
        <label>2</label>
    </ligand>
</feature>
<feature type="binding site" evidence="1">
    <location>
        <position position="794"/>
    </location>
    <ligand>
        <name>ATP</name>
        <dbReference type="ChEBI" id="CHEBI:30616"/>
        <label>2</label>
    </ligand>
</feature>
<feature type="binding site" evidence="1">
    <location>
        <position position="795"/>
    </location>
    <ligand>
        <name>ATP</name>
        <dbReference type="ChEBI" id="CHEBI:30616"/>
        <label>2</label>
    </ligand>
</feature>
<feature type="binding site" evidence="1">
    <location>
        <position position="835"/>
    </location>
    <ligand>
        <name>ATP</name>
        <dbReference type="ChEBI" id="CHEBI:30616"/>
        <label>2</label>
    </ligand>
</feature>
<feature type="binding site" evidence="1">
    <location>
        <position position="835"/>
    </location>
    <ligand>
        <name>Mg(2+)</name>
        <dbReference type="ChEBI" id="CHEBI:18420"/>
        <label>3</label>
    </ligand>
</feature>
<feature type="binding site" evidence="1">
    <location>
        <position position="835"/>
    </location>
    <ligand>
        <name>Mn(2+)</name>
        <dbReference type="ChEBI" id="CHEBI:29035"/>
        <label>3</label>
    </ligand>
</feature>
<feature type="binding site" evidence="1">
    <location>
        <position position="847"/>
    </location>
    <ligand>
        <name>ATP</name>
        <dbReference type="ChEBI" id="CHEBI:30616"/>
        <label>2</label>
    </ligand>
</feature>
<feature type="binding site" evidence="1">
    <location>
        <position position="847"/>
    </location>
    <ligand>
        <name>Mg(2+)</name>
        <dbReference type="ChEBI" id="CHEBI:18420"/>
        <label>3</label>
    </ligand>
</feature>
<feature type="binding site" evidence="1">
    <location>
        <position position="847"/>
    </location>
    <ligand>
        <name>Mg(2+)</name>
        <dbReference type="ChEBI" id="CHEBI:18420"/>
        <label>4</label>
    </ligand>
</feature>
<feature type="binding site" evidence="1">
    <location>
        <position position="847"/>
    </location>
    <ligand>
        <name>Mn(2+)</name>
        <dbReference type="ChEBI" id="CHEBI:29035"/>
        <label>3</label>
    </ligand>
</feature>
<feature type="binding site" evidence="1">
    <location>
        <position position="847"/>
    </location>
    <ligand>
        <name>Mn(2+)</name>
        <dbReference type="ChEBI" id="CHEBI:29035"/>
        <label>4</label>
    </ligand>
</feature>
<feature type="binding site" evidence="1">
    <location>
        <position position="849"/>
    </location>
    <ligand>
        <name>Mg(2+)</name>
        <dbReference type="ChEBI" id="CHEBI:18420"/>
        <label>4</label>
    </ligand>
</feature>
<feature type="binding site" evidence="1">
    <location>
        <position position="849"/>
    </location>
    <ligand>
        <name>Mn(2+)</name>
        <dbReference type="ChEBI" id="CHEBI:29035"/>
        <label>4</label>
    </ligand>
</feature>
<reference key="1">
    <citation type="journal article" date="2009" name="Stand. Genomic Sci.">
        <title>Complete genome sequence of Beutenbergia cavernae type strain (HKI 0122).</title>
        <authorList>
            <person name="Land M."/>
            <person name="Pukall R."/>
            <person name="Abt B."/>
            <person name="Goker M."/>
            <person name="Rohde M."/>
            <person name="Glavina Del Rio T."/>
            <person name="Tice H."/>
            <person name="Copeland A."/>
            <person name="Cheng J.F."/>
            <person name="Lucas S."/>
            <person name="Chen F."/>
            <person name="Nolan M."/>
            <person name="Bruce D."/>
            <person name="Goodwin L."/>
            <person name="Pitluck S."/>
            <person name="Ivanova N."/>
            <person name="Mavromatis K."/>
            <person name="Ovchinnikova G."/>
            <person name="Pati A."/>
            <person name="Chen A."/>
            <person name="Palaniappan K."/>
            <person name="Hauser L."/>
            <person name="Chang Y.J."/>
            <person name="Jefferies C.C."/>
            <person name="Saunders E."/>
            <person name="Brettin T."/>
            <person name="Detter J.C."/>
            <person name="Han C."/>
            <person name="Chain P."/>
            <person name="Bristow J."/>
            <person name="Eisen J.A."/>
            <person name="Markowitz V."/>
            <person name="Hugenholtz P."/>
            <person name="Kyrpides N.C."/>
            <person name="Klenk H.P."/>
            <person name="Lapidus A."/>
        </authorList>
    </citation>
    <scope>NUCLEOTIDE SEQUENCE [LARGE SCALE GENOMIC DNA]</scope>
    <source>
        <strain>ATCC BAA-8 / DSM 12333 / CCUG 43141 / JCM 11478 / NBRC 16432 / NCIMB 13614 / HKI 0122</strain>
    </source>
</reference>
<protein>
    <recommendedName>
        <fullName evidence="1">Carbamoyl phosphate synthase large chain</fullName>
        <ecNumber evidence="1">6.3.4.16</ecNumber>
        <ecNumber evidence="1">6.3.5.5</ecNumber>
    </recommendedName>
    <alternativeName>
        <fullName evidence="1">Carbamoyl phosphate synthetase ammonia chain</fullName>
    </alternativeName>
</protein>
<sequence length="1109" mass="118454">MPRRTDLTSVLVIGSGPIVIGQAAEFDYSGTQACRVLREEGLRVILVNSNPATIMTDPEFADATYVEPITPEVVASIIAKERPDALLPTLGGQTALNTAIALHEAGVLAEYDVELIGANIEAIHLAEDRDQFKGVVERCGAESARSHIAHTIEEVLEAARDLGYPLVVRPSFTMGGLGSGIAYDEADLRRIAGAGLHYSPTTEVLLEESILGWKEYELELMRDRNDNVVVVCSIENVDPVGVHTGDSITVAPALTLTDREYQRLRDVGIAVIREVGVDTGGCNIQFAVHPDTGRVVVIEMNPRVSRSSALASKATGFPIAKIAARLAVGYTLDEIPNDITGSTPASFEPTLDYVVVKVPRFAFEKFPAADPLLTTTMKSVGEAMALGRNFTEALQKAMRSIDKAGSTFHWRGQAPDPERTAALVDAARTPTEGRLVQVQQAIRGGATLEELFEATAIDPWFLDQLFLLEEVAGRLAAVDALDAGVLALAKRHGFSDAQVAEIRDLGEATVREIRHAYGLRPVYKTVDTCAAEFEARTPYHYSSYDAETEVQPRDRPAVLILGSGPNRIGQGIEFDYSCVHAALALKGEYETVMVNCNPETVSTDYDTADRLYFEPLTFEDVLEVYHAELAVGPVAGIIVQLGGQTPLSLATRLADAGLPIWGTPPEAIDAAEDRGVFGEVLVAAGLPAPAFGTATSLAQARAVADRIGYPVLVRPSYVLGGRGMEIVYDVEQLTDYVRRATPTDGPADAPVFASPVLIDRFLDEAIEIDVDALYDGHELFLGGVMEHIEEAGIHSGDSACVLPPVTLSRREIERIRTSTEAIARGVGVRGLLNVQFALSSDVLYVLEANPRASRTVPFVAKATGVPLAKAASLLMAGATIADLRASGHLPAVDGTYAHPSSPVAVKEAVLPFKRFRTRAGTVVDTVLGPEMRSTGEVMGYDVDVPAAFAKSQAAAYGGLPTSGRVFVSVADRDKRSIVFPVARLVELGFEILATTGTADVLRRYGIDSRVVRKASDGRGPDGELTVVDLITAGEIDMVVNTPNGQGARADGYDIRTATTAADKPIVTTTQQFAAAVLGIEAIRRGPFAVASLQEHDAARAARETEGVHA</sequence>
<dbReference type="EC" id="6.3.4.16" evidence="1"/>
<dbReference type="EC" id="6.3.5.5" evidence="1"/>
<dbReference type="EMBL" id="CP001618">
    <property type="protein sequence ID" value="ACQ80293.1"/>
    <property type="molecule type" value="Genomic_DNA"/>
</dbReference>
<dbReference type="RefSeq" id="WP_015882533.1">
    <property type="nucleotide sequence ID" value="NC_012669.1"/>
</dbReference>
<dbReference type="SMR" id="C5C687"/>
<dbReference type="STRING" id="471853.Bcav_2038"/>
<dbReference type="KEGG" id="bcv:Bcav_2038"/>
<dbReference type="eggNOG" id="COG0458">
    <property type="taxonomic scope" value="Bacteria"/>
</dbReference>
<dbReference type="HOGENOM" id="CLU_000513_1_0_11"/>
<dbReference type="OrthoDB" id="9804197at2"/>
<dbReference type="UniPathway" id="UPA00068">
    <property type="reaction ID" value="UER00171"/>
</dbReference>
<dbReference type="UniPathway" id="UPA00070">
    <property type="reaction ID" value="UER00115"/>
</dbReference>
<dbReference type="Proteomes" id="UP000007962">
    <property type="component" value="Chromosome"/>
</dbReference>
<dbReference type="GO" id="GO:0005737">
    <property type="term" value="C:cytoplasm"/>
    <property type="evidence" value="ECO:0007669"/>
    <property type="project" value="TreeGrafter"/>
</dbReference>
<dbReference type="GO" id="GO:0005524">
    <property type="term" value="F:ATP binding"/>
    <property type="evidence" value="ECO:0007669"/>
    <property type="project" value="UniProtKB-UniRule"/>
</dbReference>
<dbReference type="GO" id="GO:0004087">
    <property type="term" value="F:carbamoyl-phosphate synthase (ammonia) activity"/>
    <property type="evidence" value="ECO:0007669"/>
    <property type="project" value="RHEA"/>
</dbReference>
<dbReference type="GO" id="GO:0004088">
    <property type="term" value="F:carbamoyl-phosphate synthase (glutamine-hydrolyzing) activity"/>
    <property type="evidence" value="ECO:0007669"/>
    <property type="project" value="UniProtKB-UniRule"/>
</dbReference>
<dbReference type="GO" id="GO:0046872">
    <property type="term" value="F:metal ion binding"/>
    <property type="evidence" value="ECO:0007669"/>
    <property type="project" value="UniProtKB-KW"/>
</dbReference>
<dbReference type="GO" id="GO:0044205">
    <property type="term" value="P:'de novo' UMP biosynthetic process"/>
    <property type="evidence" value="ECO:0007669"/>
    <property type="project" value="UniProtKB-UniRule"/>
</dbReference>
<dbReference type="GO" id="GO:0006541">
    <property type="term" value="P:glutamine metabolic process"/>
    <property type="evidence" value="ECO:0007669"/>
    <property type="project" value="TreeGrafter"/>
</dbReference>
<dbReference type="GO" id="GO:0006526">
    <property type="term" value="P:L-arginine biosynthetic process"/>
    <property type="evidence" value="ECO:0007669"/>
    <property type="project" value="UniProtKB-UniRule"/>
</dbReference>
<dbReference type="CDD" id="cd01424">
    <property type="entry name" value="MGS_CPS_II"/>
    <property type="match status" value="1"/>
</dbReference>
<dbReference type="FunFam" id="1.10.1030.10:FF:000002">
    <property type="entry name" value="Carbamoyl-phosphate synthase large chain"/>
    <property type="match status" value="1"/>
</dbReference>
<dbReference type="FunFam" id="3.30.470.20:FF:000007">
    <property type="entry name" value="Carbamoyl-phosphate synthase large chain"/>
    <property type="match status" value="1"/>
</dbReference>
<dbReference type="FunFam" id="3.30.470.20:FF:000014">
    <property type="entry name" value="Carbamoyl-phosphate synthase large chain"/>
    <property type="match status" value="1"/>
</dbReference>
<dbReference type="FunFam" id="3.40.50.20:FF:000001">
    <property type="entry name" value="Carbamoyl-phosphate synthase large chain"/>
    <property type="match status" value="2"/>
</dbReference>
<dbReference type="Gene3D" id="3.40.50.20">
    <property type="match status" value="2"/>
</dbReference>
<dbReference type="Gene3D" id="3.30.1490.20">
    <property type="entry name" value="ATP-grasp fold, A domain"/>
    <property type="match status" value="1"/>
</dbReference>
<dbReference type="Gene3D" id="3.30.470.20">
    <property type="entry name" value="ATP-grasp fold, B domain"/>
    <property type="match status" value="2"/>
</dbReference>
<dbReference type="Gene3D" id="1.10.1030.10">
    <property type="entry name" value="Carbamoyl-phosphate synthetase, large subunit oligomerisation domain"/>
    <property type="match status" value="1"/>
</dbReference>
<dbReference type="Gene3D" id="3.40.50.1380">
    <property type="entry name" value="Methylglyoxal synthase-like domain"/>
    <property type="match status" value="1"/>
</dbReference>
<dbReference type="HAMAP" id="MF_01210_B">
    <property type="entry name" value="CPSase_L_chain_B"/>
    <property type="match status" value="1"/>
</dbReference>
<dbReference type="InterPro" id="IPR011761">
    <property type="entry name" value="ATP-grasp"/>
</dbReference>
<dbReference type="InterPro" id="IPR013815">
    <property type="entry name" value="ATP_grasp_subdomain_1"/>
</dbReference>
<dbReference type="InterPro" id="IPR006275">
    <property type="entry name" value="CarbamoylP_synth_lsu"/>
</dbReference>
<dbReference type="InterPro" id="IPR005480">
    <property type="entry name" value="CarbamoylP_synth_lsu_oligo"/>
</dbReference>
<dbReference type="InterPro" id="IPR036897">
    <property type="entry name" value="CarbamoylP_synth_lsu_oligo_sf"/>
</dbReference>
<dbReference type="InterPro" id="IPR005479">
    <property type="entry name" value="CbamoylP_synth_lsu-like_ATP-bd"/>
</dbReference>
<dbReference type="InterPro" id="IPR005483">
    <property type="entry name" value="CbamoylP_synth_lsu_CPSase_dom"/>
</dbReference>
<dbReference type="InterPro" id="IPR011607">
    <property type="entry name" value="MGS-like_dom"/>
</dbReference>
<dbReference type="InterPro" id="IPR036914">
    <property type="entry name" value="MGS-like_dom_sf"/>
</dbReference>
<dbReference type="InterPro" id="IPR033937">
    <property type="entry name" value="MGS_CPS_CarB"/>
</dbReference>
<dbReference type="InterPro" id="IPR016185">
    <property type="entry name" value="PreATP-grasp_dom_sf"/>
</dbReference>
<dbReference type="NCBIfam" id="TIGR01369">
    <property type="entry name" value="CPSaseII_lrg"/>
    <property type="match status" value="1"/>
</dbReference>
<dbReference type="NCBIfam" id="NF003671">
    <property type="entry name" value="PRK05294.1"/>
    <property type="match status" value="1"/>
</dbReference>
<dbReference type="NCBIfam" id="NF009455">
    <property type="entry name" value="PRK12815.1"/>
    <property type="match status" value="1"/>
</dbReference>
<dbReference type="PANTHER" id="PTHR11405:SF53">
    <property type="entry name" value="CARBAMOYL-PHOSPHATE SYNTHASE [AMMONIA], MITOCHONDRIAL"/>
    <property type="match status" value="1"/>
</dbReference>
<dbReference type="PANTHER" id="PTHR11405">
    <property type="entry name" value="CARBAMOYLTRANSFERASE FAMILY MEMBER"/>
    <property type="match status" value="1"/>
</dbReference>
<dbReference type="Pfam" id="PF02786">
    <property type="entry name" value="CPSase_L_D2"/>
    <property type="match status" value="2"/>
</dbReference>
<dbReference type="Pfam" id="PF02787">
    <property type="entry name" value="CPSase_L_D3"/>
    <property type="match status" value="1"/>
</dbReference>
<dbReference type="Pfam" id="PF02142">
    <property type="entry name" value="MGS"/>
    <property type="match status" value="1"/>
</dbReference>
<dbReference type="PRINTS" id="PR00098">
    <property type="entry name" value="CPSASE"/>
</dbReference>
<dbReference type="SMART" id="SM01096">
    <property type="entry name" value="CPSase_L_D3"/>
    <property type="match status" value="1"/>
</dbReference>
<dbReference type="SMART" id="SM00851">
    <property type="entry name" value="MGS"/>
    <property type="match status" value="1"/>
</dbReference>
<dbReference type="SUPFAM" id="SSF48108">
    <property type="entry name" value="Carbamoyl phosphate synthetase, large subunit connection domain"/>
    <property type="match status" value="1"/>
</dbReference>
<dbReference type="SUPFAM" id="SSF56059">
    <property type="entry name" value="Glutathione synthetase ATP-binding domain-like"/>
    <property type="match status" value="2"/>
</dbReference>
<dbReference type="SUPFAM" id="SSF52335">
    <property type="entry name" value="Methylglyoxal synthase-like"/>
    <property type="match status" value="1"/>
</dbReference>
<dbReference type="SUPFAM" id="SSF52440">
    <property type="entry name" value="PreATP-grasp domain"/>
    <property type="match status" value="2"/>
</dbReference>
<dbReference type="PROSITE" id="PS50975">
    <property type="entry name" value="ATP_GRASP"/>
    <property type="match status" value="2"/>
</dbReference>
<dbReference type="PROSITE" id="PS00866">
    <property type="entry name" value="CPSASE_1"/>
    <property type="match status" value="2"/>
</dbReference>
<dbReference type="PROSITE" id="PS00867">
    <property type="entry name" value="CPSASE_2"/>
    <property type="match status" value="2"/>
</dbReference>
<dbReference type="PROSITE" id="PS51855">
    <property type="entry name" value="MGS"/>
    <property type="match status" value="1"/>
</dbReference>
<accession>C5C687</accession>
<gene>
    <name evidence="1" type="primary">carB</name>
    <name type="ordered locus">Bcav_2038</name>
</gene>
<organism>
    <name type="scientific">Beutenbergia cavernae (strain ATCC BAA-8 / DSM 12333 / CCUG 43141 / JCM 11478 / NBRC 16432 / NCIMB 13614 / HKI 0122)</name>
    <dbReference type="NCBI Taxonomy" id="471853"/>
    <lineage>
        <taxon>Bacteria</taxon>
        <taxon>Bacillati</taxon>
        <taxon>Actinomycetota</taxon>
        <taxon>Actinomycetes</taxon>
        <taxon>Micrococcales</taxon>
        <taxon>Beutenbergiaceae</taxon>
        <taxon>Beutenbergia</taxon>
    </lineage>
</organism>
<evidence type="ECO:0000255" key="1">
    <source>
        <dbReference type="HAMAP-Rule" id="MF_01210"/>
    </source>
</evidence>